<dbReference type="EC" id="3.-.-.-"/>
<dbReference type="EMBL" id="AE000782">
    <property type="protein sequence ID" value="AAB89475.1"/>
    <property type="molecule type" value="Genomic_DNA"/>
</dbReference>
<dbReference type="PIR" id="F69471">
    <property type="entry name" value="F69471"/>
</dbReference>
<dbReference type="SMR" id="O28499"/>
<dbReference type="STRING" id="224325.AF_1775"/>
<dbReference type="PaxDb" id="224325-AF_1775"/>
<dbReference type="DNASU" id="1484998"/>
<dbReference type="EnsemblBacteria" id="AAB89475">
    <property type="protein sequence ID" value="AAB89475"/>
    <property type="gene ID" value="AF_1775"/>
</dbReference>
<dbReference type="KEGG" id="afu:AF_1775"/>
<dbReference type="eggNOG" id="arCOG00692">
    <property type="taxonomic scope" value="Archaea"/>
</dbReference>
<dbReference type="HOGENOM" id="CLU_012358_1_0_2"/>
<dbReference type="PhylomeDB" id="O28499"/>
<dbReference type="Proteomes" id="UP000002199">
    <property type="component" value="Chromosome"/>
</dbReference>
<dbReference type="GO" id="GO:0016787">
    <property type="term" value="F:hydrolase activity"/>
    <property type="evidence" value="ECO:0007669"/>
    <property type="project" value="UniProtKB-KW"/>
</dbReference>
<dbReference type="GO" id="GO:0046872">
    <property type="term" value="F:metal ion binding"/>
    <property type="evidence" value="ECO:0007669"/>
    <property type="project" value="UniProtKB-KW"/>
</dbReference>
<dbReference type="CDD" id="cd01305">
    <property type="entry name" value="archeal_chlorohydrolases"/>
    <property type="match status" value="1"/>
</dbReference>
<dbReference type="Gene3D" id="3.20.20.140">
    <property type="entry name" value="Metal-dependent hydrolases"/>
    <property type="match status" value="1"/>
</dbReference>
<dbReference type="InterPro" id="IPR032466">
    <property type="entry name" value="Metal_Hydrolase"/>
</dbReference>
<dbReference type="SUPFAM" id="SSF51556">
    <property type="entry name" value="Metallo-dependent hydrolases"/>
    <property type="match status" value="1"/>
</dbReference>
<name>Y1775_ARCFU</name>
<comment type="similarity">
    <text evidence="2">Belongs to the metallo-dependent hydrolases superfamily. ATZ/TRZ family.</text>
</comment>
<accession>O28499</accession>
<feature type="chain" id="PRO_0000122310" description="Putative aminohydrolase AF_1775">
    <location>
        <begin position="1"/>
        <end position="330"/>
    </location>
</feature>
<feature type="binding site" evidence="1">
    <location>
        <position position="54"/>
    </location>
    <ligand>
        <name>Zn(2+)</name>
        <dbReference type="ChEBI" id="CHEBI:29105"/>
    </ligand>
</feature>
<feature type="binding site" evidence="1">
    <location>
        <position position="56"/>
    </location>
    <ligand>
        <name>Zn(2+)</name>
        <dbReference type="ChEBI" id="CHEBI:29105"/>
    </ligand>
</feature>
<feature type="binding site" evidence="1">
    <location>
        <position position="181"/>
    </location>
    <ligand>
        <name>Zn(2+)</name>
        <dbReference type="ChEBI" id="CHEBI:29105"/>
    </ligand>
</feature>
<feature type="binding site" evidence="1">
    <location>
        <position position="253"/>
    </location>
    <ligand>
        <name>Zn(2+)</name>
        <dbReference type="ChEBI" id="CHEBI:29105"/>
    </ligand>
</feature>
<evidence type="ECO:0000255" key="1"/>
<evidence type="ECO:0000305" key="2"/>
<organism>
    <name type="scientific">Archaeoglobus fulgidus (strain ATCC 49558 / DSM 4304 / JCM 9628 / NBRC 100126 / VC-16)</name>
    <dbReference type="NCBI Taxonomy" id="224325"/>
    <lineage>
        <taxon>Archaea</taxon>
        <taxon>Methanobacteriati</taxon>
        <taxon>Methanobacteriota</taxon>
        <taxon>Archaeoglobi</taxon>
        <taxon>Archaeoglobales</taxon>
        <taxon>Archaeoglobaceae</taxon>
        <taxon>Archaeoglobus</taxon>
    </lineage>
</organism>
<keyword id="KW-0378">Hydrolase</keyword>
<keyword id="KW-0479">Metal-binding</keyword>
<keyword id="KW-1185">Reference proteome</keyword>
<keyword id="KW-0862">Zinc</keyword>
<protein>
    <recommendedName>
        <fullName>Putative aminohydrolase AF_1775</fullName>
        <ecNumber>3.-.-.-</ecNumber>
    </recommendedName>
</protein>
<reference key="1">
    <citation type="journal article" date="1997" name="Nature">
        <title>The complete genome sequence of the hyperthermophilic, sulphate-reducing archaeon Archaeoglobus fulgidus.</title>
        <authorList>
            <person name="Klenk H.-P."/>
            <person name="Clayton R.A."/>
            <person name="Tomb J.-F."/>
            <person name="White O."/>
            <person name="Nelson K.E."/>
            <person name="Ketchum K.A."/>
            <person name="Dodson R.J."/>
            <person name="Gwinn M.L."/>
            <person name="Hickey E.K."/>
            <person name="Peterson J.D."/>
            <person name="Richardson D.L."/>
            <person name="Kerlavage A.R."/>
            <person name="Graham D.E."/>
            <person name="Kyrpides N.C."/>
            <person name="Fleischmann R.D."/>
            <person name="Quackenbush J."/>
            <person name="Lee N.H."/>
            <person name="Sutton G.G."/>
            <person name="Gill S.R."/>
            <person name="Kirkness E.F."/>
            <person name="Dougherty B.A."/>
            <person name="McKenney K."/>
            <person name="Adams M.D."/>
            <person name="Loftus B.J."/>
            <person name="Peterson S.N."/>
            <person name="Reich C.I."/>
            <person name="McNeil L.K."/>
            <person name="Badger J.H."/>
            <person name="Glodek A."/>
            <person name="Zhou L."/>
            <person name="Overbeek R."/>
            <person name="Gocayne J.D."/>
            <person name="Weidman J.F."/>
            <person name="McDonald L.A."/>
            <person name="Utterback T.R."/>
            <person name="Cotton M.D."/>
            <person name="Spriggs T."/>
            <person name="Artiach P."/>
            <person name="Kaine B.P."/>
            <person name="Sykes S.M."/>
            <person name="Sadow P.W."/>
            <person name="D'Andrea K.P."/>
            <person name="Bowman C."/>
            <person name="Fujii C."/>
            <person name="Garland S.A."/>
            <person name="Mason T.M."/>
            <person name="Olsen G.J."/>
            <person name="Fraser C.M."/>
            <person name="Smith H.O."/>
            <person name="Woese C.R."/>
            <person name="Venter J.C."/>
        </authorList>
    </citation>
    <scope>NUCLEOTIDE SEQUENCE [LARGE SCALE GENOMIC DNA]</scope>
    <source>
        <strain>ATCC 49558 / DSM 4304 / JCM 9628 / NBRC 100126 / VC-16</strain>
    </source>
</reference>
<proteinExistence type="inferred from homology"/>
<gene>
    <name type="ordered locus">AF_1775</name>
</gene>
<sequence length="330" mass="37069">MGEYLTLPMEVYSGILVTHEGVFHGDLIVEEMAFEESRVEKDDFVISPTFFNAHTHLGDAALREAPRLDLVSIVGPGGYKHRMLSQIDSKTLRQEVELEVRISRDAGTSHFLDFREGGKAGLEIVKGIDGVLPLARPTSVEEAEEVEAFGFAYSSARDHDLKLMEEVREIARRRKMLFAIHAGEKDCADVDAALALEPDFVVHMNSCPEKIREFVEAEIPIVSCIRSNAFFGLLNKKSYELLSEYEKWMLGTDNAMISTASMLDEMHFAAYLIGKEKAILRAATASYAVFGFRHGYVVFNRNCSFRRTSDPLLTLVRRAGVKDIERVLIL</sequence>